<feature type="chain" id="PRO_1000096602" description="Uracil-DNA glycosylase">
    <location>
        <begin position="1"/>
        <end position="229"/>
    </location>
</feature>
<feature type="active site" description="Proton acceptor" evidence="1">
    <location>
        <position position="64"/>
    </location>
</feature>
<gene>
    <name evidence="1" type="primary">ung</name>
    <name type="ordered locus">SeD_A2975</name>
</gene>
<comment type="function">
    <text evidence="1">Excises uracil residues from the DNA which can arise as a result of misincorporation of dUMP residues by DNA polymerase or due to deamination of cytosine.</text>
</comment>
<comment type="catalytic activity">
    <reaction evidence="1">
        <text>Hydrolyzes single-stranded DNA or mismatched double-stranded DNA and polynucleotides, releasing free uracil.</text>
        <dbReference type="EC" id="3.2.2.27"/>
    </reaction>
</comment>
<comment type="subcellular location">
    <subcellularLocation>
        <location evidence="1">Cytoplasm</location>
    </subcellularLocation>
</comment>
<comment type="similarity">
    <text evidence="1">Belongs to the uracil-DNA glycosylase (UDG) superfamily. UNG family.</text>
</comment>
<protein>
    <recommendedName>
        <fullName evidence="1">Uracil-DNA glycosylase</fullName>
        <shortName evidence="1">UDG</shortName>
        <ecNumber evidence="1">3.2.2.27</ecNumber>
    </recommendedName>
</protein>
<keyword id="KW-0963">Cytoplasm</keyword>
<keyword id="KW-0227">DNA damage</keyword>
<keyword id="KW-0234">DNA repair</keyword>
<keyword id="KW-0378">Hydrolase</keyword>
<sequence length="229" mass="25480">MATELTWHDVLADEKQQPYFINTLHTVAGERQSGITVYPPQKDVFNAFRFTELGDVKVVILGQDPYHGPGQAHGLAFSVRPGIAPPPSLVNMYKELEASIPGFVRPAHGYLESWARQGVLLLNTVLTVRAGQAHSHASLGWETFTDKVISLINQHREGVVFLLWGSHAQKKGAIIDPQRHHILKAPHPSPLSAHRGFFGCNHFALTNQWLEQHGEKTIDWTPVLPAESE</sequence>
<evidence type="ECO:0000255" key="1">
    <source>
        <dbReference type="HAMAP-Rule" id="MF_00148"/>
    </source>
</evidence>
<proteinExistence type="inferred from homology"/>
<dbReference type="EC" id="3.2.2.27" evidence="1"/>
<dbReference type="EMBL" id="CP001144">
    <property type="protein sequence ID" value="ACH74756.1"/>
    <property type="molecule type" value="Genomic_DNA"/>
</dbReference>
<dbReference type="RefSeq" id="WP_000179978.1">
    <property type="nucleotide sequence ID" value="NC_011205.1"/>
</dbReference>
<dbReference type="SMR" id="B5FRD9"/>
<dbReference type="KEGG" id="sed:SeD_A2975"/>
<dbReference type="HOGENOM" id="CLU_032162_3_0_6"/>
<dbReference type="Proteomes" id="UP000008322">
    <property type="component" value="Chromosome"/>
</dbReference>
<dbReference type="GO" id="GO:0005737">
    <property type="term" value="C:cytoplasm"/>
    <property type="evidence" value="ECO:0007669"/>
    <property type="project" value="UniProtKB-SubCell"/>
</dbReference>
<dbReference type="GO" id="GO:0004844">
    <property type="term" value="F:uracil DNA N-glycosylase activity"/>
    <property type="evidence" value="ECO:0007669"/>
    <property type="project" value="UniProtKB-UniRule"/>
</dbReference>
<dbReference type="GO" id="GO:0097510">
    <property type="term" value="P:base-excision repair, AP site formation via deaminated base removal"/>
    <property type="evidence" value="ECO:0007669"/>
    <property type="project" value="TreeGrafter"/>
</dbReference>
<dbReference type="CDD" id="cd10027">
    <property type="entry name" value="UDG-F1-like"/>
    <property type="match status" value="1"/>
</dbReference>
<dbReference type="FunFam" id="3.40.470.10:FF:000001">
    <property type="entry name" value="Uracil-DNA glycosylase"/>
    <property type="match status" value="1"/>
</dbReference>
<dbReference type="Gene3D" id="3.40.470.10">
    <property type="entry name" value="Uracil-DNA glycosylase-like domain"/>
    <property type="match status" value="1"/>
</dbReference>
<dbReference type="HAMAP" id="MF_00148">
    <property type="entry name" value="UDG"/>
    <property type="match status" value="1"/>
</dbReference>
<dbReference type="InterPro" id="IPR002043">
    <property type="entry name" value="UDG_fam1"/>
</dbReference>
<dbReference type="InterPro" id="IPR018085">
    <property type="entry name" value="Ura-DNA_Glyclase_AS"/>
</dbReference>
<dbReference type="InterPro" id="IPR005122">
    <property type="entry name" value="Uracil-DNA_glycosylase-like"/>
</dbReference>
<dbReference type="InterPro" id="IPR036895">
    <property type="entry name" value="Uracil-DNA_glycosylase-like_sf"/>
</dbReference>
<dbReference type="NCBIfam" id="NF003588">
    <property type="entry name" value="PRK05254.1-1"/>
    <property type="match status" value="1"/>
</dbReference>
<dbReference type="NCBIfam" id="NF003589">
    <property type="entry name" value="PRK05254.1-2"/>
    <property type="match status" value="1"/>
</dbReference>
<dbReference type="NCBIfam" id="NF003591">
    <property type="entry name" value="PRK05254.1-4"/>
    <property type="match status" value="1"/>
</dbReference>
<dbReference type="NCBIfam" id="NF003592">
    <property type="entry name" value="PRK05254.1-5"/>
    <property type="match status" value="1"/>
</dbReference>
<dbReference type="NCBIfam" id="TIGR00628">
    <property type="entry name" value="ung"/>
    <property type="match status" value="1"/>
</dbReference>
<dbReference type="PANTHER" id="PTHR11264">
    <property type="entry name" value="URACIL-DNA GLYCOSYLASE"/>
    <property type="match status" value="1"/>
</dbReference>
<dbReference type="PANTHER" id="PTHR11264:SF0">
    <property type="entry name" value="URACIL-DNA GLYCOSYLASE"/>
    <property type="match status" value="1"/>
</dbReference>
<dbReference type="Pfam" id="PF03167">
    <property type="entry name" value="UDG"/>
    <property type="match status" value="1"/>
</dbReference>
<dbReference type="SMART" id="SM00986">
    <property type="entry name" value="UDG"/>
    <property type="match status" value="1"/>
</dbReference>
<dbReference type="SMART" id="SM00987">
    <property type="entry name" value="UreE_C"/>
    <property type="match status" value="1"/>
</dbReference>
<dbReference type="SUPFAM" id="SSF52141">
    <property type="entry name" value="Uracil-DNA glycosylase-like"/>
    <property type="match status" value="1"/>
</dbReference>
<dbReference type="PROSITE" id="PS00130">
    <property type="entry name" value="U_DNA_GLYCOSYLASE"/>
    <property type="match status" value="1"/>
</dbReference>
<organism>
    <name type="scientific">Salmonella dublin (strain CT_02021853)</name>
    <dbReference type="NCBI Taxonomy" id="439851"/>
    <lineage>
        <taxon>Bacteria</taxon>
        <taxon>Pseudomonadati</taxon>
        <taxon>Pseudomonadota</taxon>
        <taxon>Gammaproteobacteria</taxon>
        <taxon>Enterobacterales</taxon>
        <taxon>Enterobacteriaceae</taxon>
        <taxon>Salmonella</taxon>
    </lineage>
</organism>
<accession>B5FRD9</accession>
<reference key="1">
    <citation type="journal article" date="2011" name="J. Bacteriol.">
        <title>Comparative genomics of 28 Salmonella enterica isolates: evidence for CRISPR-mediated adaptive sublineage evolution.</title>
        <authorList>
            <person name="Fricke W.F."/>
            <person name="Mammel M.K."/>
            <person name="McDermott P.F."/>
            <person name="Tartera C."/>
            <person name="White D.G."/>
            <person name="Leclerc J.E."/>
            <person name="Ravel J."/>
            <person name="Cebula T.A."/>
        </authorList>
    </citation>
    <scope>NUCLEOTIDE SEQUENCE [LARGE SCALE GENOMIC DNA]</scope>
    <source>
        <strain>CT_02021853</strain>
    </source>
</reference>
<name>UNG_SALDC</name>